<organism>
    <name type="scientific">Phaeodactylum tricornutum (strain CCAP 1055/1)</name>
    <dbReference type="NCBI Taxonomy" id="556484"/>
    <lineage>
        <taxon>Eukaryota</taxon>
        <taxon>Sar</taxon>
        <taxon>Stramenopiles</taxon>
        <taxon>Ochrophyta</taxon>
        <taxon>Bacillariophyta</taxon>
        <taxon>Bacillariophyceae</taxon>
        <taxon>Bacillariophycidae</taxon>
        <taxon>Naviculales</taxon>
        <taxon>Phaeodactylaceae</taxon>
        <taxon>Phaeodactylum</taxon>
    </lineage>
</organism>
<protein>
    <recommendedName>
        <fullName evidence="1">Photosystem I reaction center subunit VIII</fullName>
        <shortName evidence="1">PSI-I</shortName>
    </recommendedName>
</protein>
<gene>
    <name evidence="1" type="primary">psaI</name>
</gene>
<evidence type="ECO:0000255" key="1">
    <source>
        <dbReference type="HAMAP-Rule" id="MF_00431"/>
    </source>
</evidence>
<reference key="1">
    <citation type="journal article" date="2007" name="Mol. Genet. Genomics">
        <title>Chloroplast genomes of the diatoms Phaeodactylum tricornutum and Thalassiosira pseudonana: comparison with other plastid genomes of the red lineage.</title>
        <authorList>
            <person name="Oudot-Le Secq M.-P."/>
            <person name="Grimwood J."/>
            <person name="Shapiro H."/>
            <person name="Armbrust E.V."/>
            <person name="Bowler C."/>
            <person name="Green B.R."/>
        </authorList>
    </citation>
    <scope>NUCLEOTIDE SEQUENCE [LARGE SCALE GENOMIC DNA]</scope>
    <source>
        <strain>CCAP 1055/1</strain>
    </source>
</reference>
<feature type="chain" id="PRO_0000276046" description="Photosystem I reaction center subunit VIII">
    <location>
        <begin position="1"/>
        <end position="36"/>
    </location>
</feature>
<feature type="transmembrane region" description="Helical" evidence="1">
    <location>
        <begin position="8"/>
        <end position="28"/>
    </location>
</feature>
<sequence length="36" mass="3815">MAASFLPAILVPIVGLVFPALSMALFFIYASIDDIS</sequence>
<name>PSAI_PHATC</name>
<keyword id="KW-0150">Chloroplast</keyword>
<keyword id="KW-0472">Membrane</keyword>
<keyword id="KW-0602">Photosynthesis</keyword>
<keyword id="KW-0603">Photosystem I</keyword>
<keyword id="KW-0934">Plastid</keyword>
<keyword id="KW-1185">Reference proteome</keyword>
<keyword id="KW-0793">Thylakoid</keyword>
<keyword id="KW-0812">Transmembrane</keyword>
<keyword id="KW-1133">Transmembrane helix</keyword>
<geneLocation type="chloroplast"/>
<dbReference type="EMBL" id="EF067920">
    <property type="protein sequence ID" value="ABK20601.1"/>
    <property type="molecule type" value="Genomic_DNA"/>
</dbReference>
<dbReference type="RefSeq" id="YP_874378.1">
    <property type="nucleotide sequence ID" value="NC_008588.1"/>
</dbReference>
<dbReference type="SMR" id="A0T098"/>
<dbReference type="STRING" id="556484.A0T098"/>
<dbReference type="GeneID" id="4524621"/>
<dbReference type="InParanoid" id="A0T098"/>
<dbReference type="Proteomes" id="UP000000759">
    <property type="component" value="Chloroplast"/>
</dbReference>
<dbReference type="GO" id="GO:0009535">
    <property type="term" value="C:chloroplast thylakoid membrane"/>
    <property type="evidence" value="ECO:0007669"/>
    <property type="project" value="UniProtKB-SubCell"/>
</dbReference>
<dbReference type="GO" id="GO:0009522">
    <property type="term" value="C:photosystem I"/>
    <property type="evidence" value="ECO:0007669"/>
    <property type="project" value="UniProtKB-KW"/>
</dbReference>
<dbReference type="GO" id="GO:0015979">
    <property type="term" value="P:photosynthesis"/>
    <property type="evidence" value="ECO:0007669"/>
    <property type="project" value="UniProtKB-UniRule"/>
</dbReference>
<dbReference type="HAMAP" id="MF_00431">
    <property type="entry name" value="PSI_PsaI"/>
    <property type="match status" value="1"/>
</dbReference>
<dbReference type="InterPro" id="IPR001302">
    <property type="entry name" value="PSI_PsaI"/>
</dbReference>
<dbReference type="InterPro" id="IPR036357">
    <property type="entry name" value="PSI_PsaI_sf"/>
</dbReference>
<dbReference type="NCBIfam" id="TIGR03052">
    <property type="entry name" value="PS_I_psaI"/>
    <property type="match status" value="1"/>
</dbReference>
<dbReference type="Pfam" id="PF00796">
    <property type="entry name" value="PSI_8"/>
    <property type="match status" value="1"/>
</dbReference>
<dbReference type="SUPFAM" id="SSF81540">
    <property type="entry name" value="Subunit VIII of photosystem I reaction centre, PsaI"/>
    <property type="match status" value="1"/>
</dbReference>
<proteinExistence type="inferred from homology"/>
<accession>A0T098</accession>
<comment type="function">
    <text evidence="1">May help in the organization of the PsaL subunit.</text>
</comment>
<comment type="subcellular location">
    <subcellularLocation>
        <location evidence="1">Plastid</location>
        <location evidence="1">Chloroplast thylakoid membrane</location>
        <topology evidence="1">Single-pass membrane protein</topology>
    </subcellularLocation>
</comment>
<comment type="similarity">
    <text evidence="1">Belongs to the PsaI family.</text>
</comment>